<sequence>MSVLTPLLLRGLTGSARRLPMPCARVHSKPPREQLGTMDIAIGLTSCFVCFLLPSGWVLSHLENYKKRE</sequence>
<protein>
    <recommendedName>
        <fullName>Cytochrome c oxidase subunit 8A, mitochondrial</fullName>
    </recommendedName>
    <alternativeName>
        <fullName>Cytochrome c oxidase polypeptide VIII-liver/heart</fullName>
    </alternativeName>
    <alternativeName>
        <fullName>Cytochrome c oxidase subunit 8-2</fullName>
    </alternativeName>
</protein>
<accession>Q863G2</accession>
<feature type="transit peptide" description="Mitochondrion" evidence="2">
    <location>
        <begin position="1"/>
        <end position="25"/>
    </location>
</feature>
<feature type="chain" id="PRO_0000006190" description="Cytochrome c oxidase subunit 8A, mitochondrial">
    <location>
        <begin position="26"/>
        <end position="69"/>
    </location>
</feature>
<feature type="topological domain" description="Mitochondrial matrix" evidence="2">
    <location>
        <begin position="26"/>
        <end position="36"/>
    </location>
</feature>
<feature type="transmembrane region" description="Helical" evidence="1">
    <location>
        <begin position="37"/>
        <end position="60"/>
    </location>
</feature>
<feature type="topological domain" description="Mitochondrial intermembrane" evidence="2">
    <location>
        <begin position="61"/>
        <end position="69"/>
    </location>
</feature>
<feature type="short sequence motif" description="SIFI-degron" evidence="2">
    <location>
        <begin position="2"/>
        <end position="19"/>
    </location>
</feature>
<name>COX8A_NYCCO</name>
<keyword id="KW-0472">Membrane</keyword>
<keyword id="KW-0496">Mitochondrion</keyword>
<keyword id="KW-0999">Mitochondrion inner membrane</keyword>
<keyword id="KW-0809">Transit peptide</keyword>
<keyword id="KW-0812">Transmembrane</keyword>
<keyword id="KW-1133">Transmembrane helix</keyword>
<keyword id="KW-0832">Ubl conjugation</keyword>
<dbReference type="EMBL" id="AY254824">
    <property type="protein sequence ID" value="AAP32255.1"/>
    <property type="molecule type" value="mRNA"/>
</dbReference>
<dbReference type="SMR" id="Q863G2"/>
<dbReference type="UniPathway" id="UPA00705"/>
<dbReference type="GO" id="GO:0005743">
    <property type="term" value="C:mitochondrial inner membrane"/>
    <property type="evidence" value="ECO:0007669"/>
    <property type="project" value="UniProtKB-SubCell"/>
</dbReference>
<dbReference type="GO" id="GO:0045277">
    <property type="term" value="C:respiratory chain complex IV"/>
    <property type="evidence" value="ECO:0007669"/>
    <property type="project" value="InterPro"/>
</dbReference>
<dbReference type="GO" id="GO:0006123">
    <property type="term" value="P:mitochondrial electron transport, cytochrome c to oxygen"/>
    <property type="evidence" value="ECO:0007669"/>
    <property type="project" value="InterPro"/>
</dbReference>
<dbReference type="CDD" id="cd00930">
    <property type="entry name" value="Cyt_c_Oxidase_VIII"/>
    <property type="match status" value="1"/>
</dbReference>
<dbReference type="FunFam" id="4.10.81.10:FF:000001">
    <property type="entry name" value="Cytochrome c oxidase subunit 8B, mitochondrial"/>
    <property type="match status" value="1"/>
</dbReference>
<dbReference type="Gene3D" id="4.10.81.10">
    <property type="entry name" value="Cytochrome c oxidase, subunit 8"/>
    <property type="match status" value="1"/>
</dbReference>
<dbReference type="InterPro" id="IPR003205">
    <property type="entry name" value="Cyt_c_oxidase_su8"/>
</dbReference>
<dbReference type="InterPro" id="IPR036548">
    <property type="entry name" value="Cyt_c_oxidase_su8_sf"/>
</dbReference>
<dbReference type="PANTHER" id="PTHR16717">
    <property type="entry name" value="CYTOCHROME C OXIDASE POLYPEPTIDE VIII"/>
    <property type="match status" value="1"/>
</dbReference>
<dbReference type="PANTHER" id="PTHR16717:SF1">
    <property type="entry name" value="CYTOCHROME C OXIDASE SUBUNIT 8A, MITOCHONDRIAL"/>
    <property type="match status" value="1"/>
</dbReference>
<dbReference type="Pfam" id="PF02285">
    <property type="entry name" value="COX8"/>
    <property type="match status" value="1"/>
</dbReference>
<dbReference type="SUPFAM" id="SSF81431">
    <property type="entry name" value="Mitochondrial cytochrome c oxidase subunit VIIIb (aka IX)"/>
    <property type="match status" value="1"/>
</dbReference>
<reference key="1">
    <citation type="journal article" date="2003" name="Proc. Natl. Acad. Sci. U.S.A.">
        <title>Adaptive evolution of cytochrome c oxidase subunit VIII in anthropoid primates.</title>
        <authorList>
            <person name="Goldberg A."/>
            <person name="Wildman D.E."/>
            <person name="Schmidt T.R."/>
            <person name="Huttemann M."/>
            <person name="Goodman M."/>
            <person name="Weiss M.L."/>
            <person name="Grossman L.I."/>
        </authorList>
    </citation>
    <scope>NUCLEOTIDE SEQUENCE [MRNA]</scope>
</reference>
<organism>
    <name type="scientific">Nycticebus coucang</name>
    <name type="common">Slow loris</name>
    <dbReference type="NCBI Taxonomy" id="9470"/>
    <lineage>
        <taxon>Eukaryota</taxon>
        <taxon>Metazoa</taxon>
        <taxon>Chordata</taxon>
        <taxon>Craniata</taxon>
        <taxon>Vertebrata</taxon>
        <taxon>Euteleostomi</taxon>
        <taxon>Mammalia</taxon>
        <taxon>Eutheria</taxon>
        <taxon>Euarchontoglires</taxon>
        <taxon>Primates</taxon>
        <taxon>Strepsirrhini</taxon>
        <taxon>Lorisiformes</taxon>
        <taxon>Lorisidae</taxon>
        <taxon>Nycticebus</taxon>
    </lineage>
</organism>
<evidence type="ECO:0000250" key="1">
    <source>
        <dbReference type="UniProtKB" id="P10175"/>
    </source>
</evidence>
<evidence type="ECO:0000250" key="2">
    <source>
        <dbReference type="UniProtKB" id="P10176"/>
    </source>
</evidence>
<evidence type="ECO:0000305" key="3"/>
<comment type="function">
    <text evidence="1">Component of the cytochrome c oxidase, the last enzyme in the mitochondrial electron transport chain which drives oxidative phosphorylation. The respiratory chain contains 3 multisubunit complexes succinate dehydrogenase (complex II, CII), ubiquinol-cytochrome c oxidoreductase (cytochrome b-c1 complex, complex III, CIII) and cytochrome c oxidase (complex IV, CIV), that cooperate to transfer electrons derived from NADH and succinate to molecular oxygen, creating an electrochemical gradient over the inner membrane that drives transmembrane transport and the ATP synthase. Cytochrome c oxidase is the component of the respiratory chain that catalyzes the reduction of oxygen to water. Electrons originating from reduced cytochrome c in the intermembrane space (IMS) are transferred via the dinuclear copper A center (CU(A)) of subunit 2 and heme A of subunit 1 to the active site in subunit 1, a binuclear center (BNC) formed by heme A3 and copper B (CU(B)). The BNC reduces molecular oxygen to 2 water molecules using 4 electrons from cytochrome c in the IMS and 4 protons from the mitochondrial matrix.</text>
</comment>
<comment type="pathway">
    <text evidence="1">Energy metabolism; oxidative phosphorylation.</text>
</comment>
<comment type="subunit">
    <text evidence="2">Component of the cytochrome c oxidase (complex IV, CIV), a multisubunit enzyme composed of 14 subunits. The complex is composed of a catalytic core of 3 subunits MT-CO1, MT-CO2 and MT-CO3, encoded in the mitochondrial DNA, and 11 supernumerary subunits COX4I, COX5A, COX5B, COX6A, COX6B, COX6C, COX7A, COX7B, COX7C, COX8 and NDUFA4, which are encoded in the nuclear genome. The complex exists as a monomer or a dimer and forms supercomplexes (SCs) in the inner mitochondrial membrane with NADH-ubiquinone oxidoreductase (complex I, CI) and ubiquinol-cytochrome c oxidoreductase (cytochrome b-c1 complex, complex III, CIII), resulting in different assemblies (supercomplex SCI(1)III(2)IV(1) and megacomplex MCI(2)III(2)IV(2)).</text>
</comment>
<comment type="subcellular location">
    <subcellularLocation>
        <location evidence="2">Mitochondrion inner membrane</location>
        <topology evidence="2">Single-pass membrane protein</topology>
    </subcellularLocation>
</comment>
<comment type="PTM">
    <text evidence="2">In response to mitochondrial stress, the precursor protein is ubiquitinated by the SIFI complex in the cytoplasm before mitochondrial import, leading to its degradation. Within the SIFI complex, UBR4 initiates ubiquitin chain that are further elongated or branched by KCMF1.</text>
</comment>
<comment type="similarity">
    <text evidence="3">Belongs to the cytochrome c oxidase VIII family.</text>
</comment>
<proteinExistence type="inferred from homology"/>
<gene>
    <name type="primary">COX8A</name>
    <name type="synonym">COX8</name>
    <name type="synonym">COX8L</name>
</gene>